<reference key="1">
    <citation type="journal article" date="2006" name="J. Biol. Chem.">
        <title>A plant locus essential for phylloquinone (vitamin K1) biosynthesis originated from a fusion of four eubacterial genes.</title>
        <authorList>
            <person name="Gross J."/>
            <person name="Cho W.K."/>
            <person name="Lezhneva L."/>
            <person name="Falk J."/>
            <person name="Krupinska K."/>
            <person name="Shinozaki K."/>
            <person name="Seki M."/>
            <person name="Herrmann R.G."/>
            <person name="Meurer J."/>
        </authorList>
    </citation>
    <scope>NUCLEOTIDE SEQUENCE [MRNA] (ISOFORMS 1 AND 2)</scope>
    <scope>ALTERNATIVE SPLICING</scope>
    <scope>FUNCTION</scope>
    <scope>DISRUPTION PHENOTYPE</scope>
</reference>
<reference key="2">
    <citation type="journal article" date="2000" name="Nature">
        <title>Sequence and analysis of chromosome 1 of the plant Arabidopsis thaliana.</title>
        <authorList>
            <person name="Theologis A."/>
            <person name="Ecker J.R."/>
            <person name="Palm C.J."/>
            <person name="Federspiel N.A."/>
            <person name="Kaul S."/>
            <person name="White O."/>
            <person name="Alonso J."/>
            <person name="Altafi H."/>
            <person name="Araujo R."/>
            <person name="Bowman C.L."/>
            <person name="Brooks S.Y."/>
            <person name="Buehler E."/>
            <person name="Chan A."/>
            <person name="Chao Q."/>
            <person name="Chen H."/>
            <person name="Cheuk R.F."/>
            <person name="Chin C.W."/>
            <person name="Chung M.K."/>
            <person name="Conn L."/>
            <person name="Conway A.B."/>
            <person name="Conway A.R."/>
            <person name="Creasy T.H."/>
            <person name="Dewar K."/>
            <person name="Dunn P."/>
            <person name="Etgu P."/>
            <person name="Feldblyum T.V."/>
            <person name="Feng J.-D."/>
            <person name="Fong B."/>
            <person name="Fujii C.Y."/>
            <person name="Gill J.E."/>
            <person name="Goldsmith A.D."/>
            <person name="Haas B."/>
            <person name="Hansen N.F."/>
            <person name="Hughes B."/>
            <person name="Huizar L."/>
            <person name="Hunter J.L."/>
            <person name="Jenkins J."/>
            <person name="Johnson-Hopson C."/>
            <person name="Khan S."/>
            <person name="Khaykin E."/>
            <person name="Kim C.J."/>
            <person name="Koo H.L."/>
            <person name="Kremenetskaia I."/>
            <person name="Kurtz D.B."/>
            <person name="Kwan A."/>
            <person name="Lam B."/>
            <person name="Langin-Hooper S."/>
            <person name="Lee A."/>
            <person name="Lee J.M."/>
            <person name="Lenz C.A."/>
            <person name="Li J.H."/>
            <person name="Li Y.-P."/>
            <person name="Lin X."/>
            <person name="Liu S.X."/>
            <person name="Liu Z.A."/>
            <person name="Luros J.S."/>
            <person name="Maiti R."/>
            <person name="Marziali A."/>
            <person name="Militscher J."/>
            <person name="Miranda M."/>
            <person name="Nguyen M."/>
            <person name="Nierman W.C."/>
            <person name="Osborne B.I."/>
            <person name="Pai G."/>
            <person name="Peterson J."/>
            <person name="Pham P.K."/>
            <person name="Rizzo M."/>
            <person name="Rooney T."/>
            <person name="Rowley D."/>
            <person name="Sakano H."/>
            <person name="Salzberg S.L."/>
            <person name="Schwartz J.R."/>
            <person name="Shinn P."/>
            <person name="Southwick A.M."/>
            <person name="Sun H."/>
            <person name="Tallon L.J."/>
            <person name="Tambunga G."/>
            <person name="Toriumi M.J."/>
            <person name="Town C.D."/>
            <person name="Utterback T."/>
            <person name="Van Aken S."/>
            <person name="Vaysberg M."/>
            <person name="Vysotskaia V.S."/>
            <person name="Walker M."/>
            <person name="Wu D."/>
            <person name="Yu G."/>
            <person name="Fraser C.M."/>
            <person name="Venter J.C."/>
            <person name="Davis R.W."/>
        </authorList>
    </citation>
    <scope>NUCLEOTIDE SEQUENCE [LARGE SCALE GENOMIC DNA]</scope>
    <source>
        <strain>cv. Columbia</strain>
    </source>
</reference>
<reference key="3">
    <citation type="journal article" date="2017" name="Plant J.">
        <title>Araport11: a complete reannotation of the Arabidopsis thaliana reference genome.</title>
        <authorList>
            <person name="Cheng C.Y."/>
            <person name="Krishnakumar V."/>
            <person name="Chan A.P."/>
            <person name="Thibaud-Nissen F."/>
            <person name="Schobel S."/>
            <person name="Town C.D."/>
        </authorList>
    </citation>
    <scope>GENOME REANNOTATION</scope>
    <source>
        <strain>cv. Columbia</strain>
    </source>
</reference>
<reference key="4">
    <citation type="submission" date="2006-07" db="EMBL/GenBank/DDBJ databases">
        <title>Large-scale analysis of RIKEN Arabidopsis full-length (RAFL) cDNAs.</title>
        <authorList>
            <person name="Totoki Y."/>
            <person name="Seki M."/>
            <person name="Ishida J."/>
            <person name="Nakajima M."/>
            <person name="Enju A."/>
            <person name="Morosawa T."/>
            <person name="Kamiya A."/>
            <person name="Narusaka M."/>
            <person name="Shin-i T."/>
            <person name="Nakagawa M."/>
            <person name="Sakamoto N."/>
            <person name="Oishi K."/>
            <person name="Kohara Y."/>
            <person name="Kobayashi M."/>
            <person name="Toyoda A."/>
            <person name="Sakaki Y."/>
            <person name="Sakurai T."/>
            <person name="Iida K."/>
            <person name="Akiyama K."/>
            <person name="Satou M."/>
            <person name="Toyoda T."/>
            <person name="Konagaya A."/>
            <person name="Carninci P."/>
            <person name="Kawai J."/>
            <person name="Hayashizaki Y."/>
            <person name="Shinozaki K."/>
        </authorList>
    </citation>
    <scope>NUCLEOTIDE SEQUENCE [MRNA] OF 345-1715 (ISOFORM 1)</scope>
</reference>
<keyword id="KW-0025">Alternative splicing</keyword>
<keyword id="KW-0150">Chloroplast</keyword>
<keyword id="KW-0456">Lyase</keyword>
<keyword id="KW-0460">Magnesium</keyword>
<keyword id="KW-0464">Manganese</keyword>
<keyword id="KW-0472">Membrane</keyword>
<keyword id="KW-0479">Metal-binding</keyword>
<keyword id="KW-0511">Multifunctional enzyme</keyword>
<keyword id="KW-0934">Plastid</keyword>
<keyword id="KW-1185">Reference proteome</keyword>
<keyword id="KW-0786">Thiamine pyrophosphate</keyword>
<keyword id="KW-0808">Transferase</keyword>
<keyword id="KW-0809">Transit peptide</keyword>
<keyword id="KW-0812">Transmembrane</keyword>
<keyword id="KW-1133">Transmembrane helix</keyword>
<organism>
    <name type="scientific">Arabidopsis thaliana</name>
    <name type="common">Mouse-ear cress</name>
    <dbReference type="NCBI Taxonomy" id="3702"/>
    <lineage>
        <taxon>Eukaryota</taxon>
        <taxon>Viridiplantae</taxon>
        <taxon>Streptophyta</taxon>
        <taxon>Embryophyta</taxon>
        <taxon>Tracheophyta</taxon>
        <taxon>Spermatophyta</taxon>
        <taxon>Magnoliopsida</taxon>
        <taxon>eudicotyledons</taxon>
        <taxon>Gunneridae</taxon>
        <taxon>Pentapetalae</taxon>
        <taxon>rosids</taxon>
        <taxon>malvids</taxon>
        <taxon>Brassicales</taxon>
        <taxon>Brassicaceae</taxon>
        <taxon>Camelineae</taxon>
        <taxon>Arabidopsis</taxon>
    </lineage>
</organism>
<dbReference type="EC" id="2.2.1.9"/>
<dbReference type="EC" id="4.2.1.113"/>
<dbReference type="EC" id="4.2.99.20"/>
<dbReference type="EMBL" id="DQ084385">
    <property type="protein sequence ID" value="AAZ40194.1"/>
    <property type="molecule type" value="mRNA"/>
</dbReference>
<dbReference type="EMBL" id="DQ084386">
    <property type="protein sequence ID" value="AAZ40195.1"/>
    <property type="molecule type" value="mRNA"/>
</dbReference>
<dbReference type="EMBL" id="AC011665">
    <property type="protein sequence ID" value="AAG51591.1"/>
    <property type="status" value="ALT_SEQ"/>
    <property type="molecule type" value="Genomic_DNA"/>
</dbReference>
<dbReference type="EMBL" id="AC011665">
    <property type="protein sequence ID" value="AAG51593.1"/>
    <property type="status" value="ALT_SEQ"/>
    <property type="molecule type" value="Genomic_DNA"/>
</dbReference>
<dbReference type="EMBL" id="CP002684">
    <property type="protein sequence ID" value="AEE34855.1"/>
    <property type="molecule type" value="Genomic_DNA"/>
</dbReference>
<dbReference type="EMBL" id="AK226959">
    <property type="protein sequence ID" value="BAE99027.1"/>
    <property type="molecule type" value="mRNA"/>
</dbReference>
<dbReference type="PIR" id="D96713">
    <property type="entry name" value="D96713"/>
</dbReference>
<dbReference type="PIR" id="E96713">
    <property type="entry name" value="E96713"/>
</dbReference>
<dbReference type="RefSeq" id="NP_001322314.1">
    <property type="nucleotide sequence ID" value="NM_001334389.1"/>
</dbReference>
<dbReference type="RefSeq" id="NP_177055.2">
    <molecule id="Q15KI9-1"/>
    <property type="nucleotide sequence ID" value="NM_105563.5"/>
</dbReference>
<dbReference type="SMR" id="Q15KI9"/>
<dbReference type="FunCoup" id="Q15KI9">
    <property type="interactions" value="1160"/>
</dbReference>
<dbReference type="STRING" id="3702.Q15KI9"/>
<dbReference type="ESTHER" id="arath-T6L1.8">
    <property type="family name" value="MenH_SHCHC"/>
</dbReference>
<dbReference type="MEROPS" id="S33.A36"/>
<dbReference type="PaxDb" id="3702-AT1G68890.1"/>
<dbReference type="ProteomicsDB" id="234723">
    <molecule id="Q15KI9-1"/>
</dbReference>
<dbReference type="EnsemblPlants" id="AT1G68890.1">
    <molecule id="Q15KI9-1"/>
    <property type="protein sequence ID" value="AT1G68890.1"/>
    <property type="gene ID" value="AT1G68890"/>
</dbReference>
<dbReference type="GeneID" id="843222"/>
<dbReference type="Gramene" id="AT1G68890.1">
    <molecule id="Q15KI9-1"/>
    <property type="protein sequence ID" value="AT1G68890.1"/>
    <property type="gene ID" value="AT1G68890"/>
</dbReference>
<dbReference type="KEGG" id="ath:AT1G68890"/>
<dbReference type="Araport" id="AT1G68890"/>
<dbReference type="TAIR" id="AT1G68890">
    <property type="gene designation" value="PHYLLO"/>
</dbReference>
<dbReference type="eggNOG" id="KOG1223">
    <property type="taxonomic scope" value="Eukaryota"/>
</dbReference>
<dbReference type="eggNOG" id="KOG2382">
    <property type="taxonomic scope" value="Eukaryota"/>
</dbReference>
<dbReference type="HOGENOM" id="CLU_001622_0_0_1"/>
<dbReference type="InParanoid" id="Q15KI9"/>
<dbReference type="BioCyc" id="ARA:AT1G68890-MONOMER"/>
<dbReference type="BioCyc" id="MetaCyc:AT1G68890-MONOMER"/>
<dbReference type="PRO" id="PR:Q15KI9"/>
<dbReference type="Proteomes" id="UP000006548">
    <property type="component" value="Chromosome 1"/>
</dbReference>
<dbReference type="ExpressionAtlas" id="Q15KI9">
    <property type="expression patterns" value="baseline and differential"/>
</dbReference>
<dbReference type="GO" id="GO:0031969">
    <property type="term" value="C:chloroplast membrane"/>
    <property type="evidence" value="ECO:0007669"/>
    <property type="project" value="UniProtKB-SubCell"/>
</dbReference>
<dbReference type="GO" id="GO:0070204">
    <property type="term" value="F:2-succinyl-5-enolpyruvyl-6-hydroxy-3-cyclohexene-1-carboxylic-acid synthase activity"/>
    <property type="evidence" value="ECO:0007669"/>
    <property type="project" value="UniProtKB-EC"/>
</dbReference>
<dbReference type="GO" id="GO:0070205">
    <property type="term" value="F:2-succinyl-6-hydroxy-2,4-cyclohexadiene-1-carboxylate synthase activity"/>
    <property type="evidence" value="ECO:0007669"/>
    <property type="project" value="UniProtKB-EC"/>
</dbReference>
<dbReference type="GO" id="GO:0046872">
    <property type="term" value="F:metal ion binding"/>
    <property type="evidence" value="ECO:0007669"/>
    <property type="project" value="UniProtKB-KW"/>
</dbReference>
<dbReference type="GO" id="GO:0043748">
    <property type="term" value="F:O-succinylbenzoate synthase activity"/>
    <property type="evidence" value="ECO:0007669"/>
    <property type="project" value="UniProtKB-EC"/>
</dbReference>
<dbReference type="GO" id="GO:0030976">
    <property type="term" value="F:thiamine pyrophosphate binding"/>
    <property type="evidence" value="ECO:0007669"/>
    <property type="project" value="InterPro"/>
</dbReference>
<dbReference type="GO" id="GO:0009063">
    <property type="term" value="P:amino acid catabolic process"/>
    <property type="evidence" value="ECO:0007669"/>
    <property type="project" value="InterPro"/>
</dbReference>
<dbReference type="GO" id="GO:0009234">
    <property type="term" value="P:menaquinone biosynthetic process"/>
    <property type="evidence" value="ECO:0007669"/>
    <property type="project" value="InterPro"/>
</dbReference>
<dbReference type="GO" id="GO:0042550">
    <property type="term" value="P:photosystem I stabilization"/>
    <property type="evidence" value="ECO:0000315"/>
    <property type="project" value="TAIR"/>
</dbReference>
<dbReference type="GO" id="GO:0042372">
    <property type="term" value="P:phylloquinone biosynthetic process"/>
    <property type="evidence" value="ECO:0000315"/>
    <property type="project" value="TAIR"/>
</dbReference>
<dbReference type="CDD" id="cd07037">
    <property type="entry name" value="TPP_PYR_MenD"/>
    <property type="match status" value="1"/>
</dbReference>
<dbReference type="CDD" id="cd02009">
    <property type="entry name" value="TPP_SHCHC_synthase"/>
    <property type="match status" value="1"/>
</dbReference>
<dbReference type="FunFam" id="3.40.50.1820:FF:000633">
    <property type="entry name" value="2-oxoglutarate decarboxylase/hydro-lyase/magnesium ion-binding protein"/>
    <property type="match status" value="1"/>
</dbReference>
<dbReference type="FunFam" id="3.40.50.970:FF:000102">
    <property type="entry name" value="Protein PHYLLO, chloroplastic"/>
    <property type="match status" value="1"/>
</dbReference>
<dbReference type="Gene3D" id="3.40.50.970">
    <property type="match status" value="2"/>
</dbReference>
<dbReference type="Gene3D" id="3.40.50.1820">
    <property type="entry name" value="alpha/beta hydrolase"/>
    <property type="match status" value="1"/>
</dbReference>
<dbReference type="Gene3D" id="3.20.20.120">
    <property type="entry name" value="Enolase-like C-terminal domain"/>
    <property type="match status" value="1"/>
</dbReference>
<dbReference type="Gene3D" id="3.30.390.10">
    <property type="entry name" value="Enolase-like, N-terminal domain"/>
    <property type="match status" value="1"/>
</dbReference>
<dbReference type="Gene3D" id="3.40.50.1220">
    <property type="entry name" value="TPP-binding domain"/>
    <property type="match status" value="1"/>
</dbReference>
<dbReference type="HAMAP" id="MF_01659">
    <property type="entry name" value="MenD"/>
    <property type="match status" value="1"/>
</dbReference>
<dbReference type="InterPro" id="IPR000073">
    <property type="entry name" value="AB_hydrolase_1"/>
</dbReference>
<dbReference type="InterPro" id="IPR029058">
    <property type="entry name" value="AB_hydrolase_fold"/>
</dbReference>
<dbReference type="InterPro" id="IPR029035">
    <property type="entry name" value="DHS-like_NAD/FAD-binding_dom"/>
</dbReference>
<dbReference type="InterPro" id="IPR036849">
    <property type="entry name" value="Enolase-like_C_sf"/>
</dbReference>
<dbReference type="InterPro" id="IPR029017">
    <property type="entry name" value="Enolase-like_N"/>
</dbReference>
<dbReference type="InterPro" id="IPR029065">
    <property type="entry name" value="Enolase_C-like"/>
</dbReference>
<dbReference type="InterPro" id="IPR018110">
    <property type="entry name" value="Mandel_Rmase/mucon_lact_enz_CS"/>
</dbReference>
<dbReference type="InterPro" id="IPR013342">
    <property type="entry name" value="Mandelate_racemase_C"/>
</dbReference>
<dbReference type="InterPro" id="IPR004433">
    <property type="entry name" value="MenaQ_synth_MenD"/>
</dbReference>
<dbReference type="InterPro" id="IPR032264">
    <property type="entry name" value="MenD_middle"/>
</dbReference>
<dbReference type="InterPro" id="IPR029061">
    <property type="entry name" value="THDP-binding"/>
</dbReference>
<dbReference type="InterPro" id="IPR012001">
    <property type="entry name" value="Thiamin_PyroP_enz_TPP-bd_dom"/>
</dbReference>
<dbReference type="InterPro" id="IPR011766">
    <property type="entry name" value="TPP_enzyme_TPP-bd"/>
</dbReference>
<dbReference type="NCBIfam" id="TIGR01927">
    <property type="entry name" value="menC_gam_Gplu"/>
    <property type="match status" value="1"/>
</dbReference>
<dbReference type="NCBIfam" id="TIGR00173">
    <property type="entry name" value="menD"/>
    <property type="match status" value="1"/>
</dbReference>
<dbReference type="PANTHER" id="PTHR42916">
    <property type="entry name" value="2-SUCCINYL-5-ENOLPYRUVYL-6-HYDROXY-3-CYCLOHEXENE-1-CARBOXYLATE SYNTHASE"/>
    <property type="match status" value="1"/>
</dbReference>
<dbReference type="PANTHER" id="PTHR42916:SF1">
    <property type="entry name" value="PROTEIN PHYLLO, CHLOROPLASTIC"/>
    <property type="match status" value="1"/>
</dbReference>
<dbReference type="Pfam" id="PF00561">
    <property type="entry name" value="Abhydrolase_1"/>
    <property type="match status" value="1"/>
</dbReference>
<dbReference type="Pfam" id="PF13378">
    <property type="entry name" value="MR_MLE_C"/>
    <property type="match status" value="1"/>
</dbReference>
<dbReference type="Pfam" id="PF02775">
    <property type="entry name" value="TPP_enzyme_C"/>
    <property type="match status" value="1"/>
</dbReference>
<dbReference type="Pfam" id="PF16582">
    <property type="entry name" value="TPP_enzyme_M_2"/>
    <property type="match status" value="1"/>
</dbReference>
<dbReference type="Pfam" id="PF02776">
    <property type="entry name" value="TPP_enzyme_N"/>
    <property type="match status" value="1"/>
</dbReference>
<dbReference type="SFLD" id="SFLDG00180">
    <property type="entry name" value="muconate_cycloisomerase"/>
    <property type="match status" value="1"/>
</dbReference>
<dbReference type="SFLD" id="SFLDF00009">
    <property type="entry name" value="o-succinylbenzoate_synthase"/>
    <property type="match status" value="1"/>
</dbReference>
<dbReference type="SMART" id="SM00922">
    <property type="entry name" value="MR_MLE"/>
    <property type="match status" value="1"/>
</dbReference>
<dbReference type="SUPFAM" id="SSF53474">
    <property type="entry name" value="alpha/beta-Hydrolases"/>
    <property type="match status" value="1"/>
</dbReference>
<dbReference type="SUPFAM" id="SSF52467">
    <property type="entry name" value="DHS-like NAD/FAD-binding domain"/>
    <property type="match status" value="1"/>
</dbReference>
<dbReference type="SUPFAM" id="SSF51604">
    <property type="entry name" value="Enolase C-terminal domain-like"/>
    <property type="match status" value="1"/>
</dbReference>
<dbReference type="SUPFAM" id="SSF54826">
    <property type="entry name" value="Enolase N-terminal domain-like"/>
    <property type="match status" value="1"/>
</dbReference>
<dbReference type="SUPFAM" id="SSF52518">
    <property type="entry name" value="Thiamin diphosphate-binding fold (THDP-binding)"/>
    <property type="match status" value="2"/>
</dbReference>
<dbReference type="PROSITE" id="PS00909">
    <property type="entry name" value="MR_MLE_2"/>
    <property type="match status" value="1"/>
</dbReference>
<protein>
    <recommendedName>
        <fullName>Protein PHYLLO, chloroplastic</fullName>
    </recommendedName>
    <domain>
        <recommendedName>
            <fullName>Inactive isochorismate synthase</fullName>
        </recommendedName>
        <alternativeName>
            <fullName>MENF</fullName>
        </alternativeName>
    </domain>
    <domain>
        <recommendedName>
            <fullName>2-succinyl-5-enolpyruvyl-6-hydroxy-3-cyclohexene-1-carboxylate synthase</fullName>
            <ecNumber>2.2.1.9</ecNumber>
        </recommendedName>
        <alternativeName>
            <fullName>MEND</fullName>
        </alternativeName>
    </domain>
    <domain>
        <recommendedName>
            <fullName>o-succinylbenzoate synthase</fullName>
            <ecNumber>4.2.1.113</ecNumber>
        </recommendedName>
        <alternativeName>
            <fullName>MENC</fullName>
        </alternativeName>
    </domain>
    <domain>
        <recommendedName>
            <fullName>2-succinyl-6-hydroxy-2,4-cyclohexadiene-1-carboxylate synthase</fullName>
            <ecNumber>4.2.99.20</ecNumber>
        </recommendedName>
        <alternativeName>
            <fullName>MENH</fullName>
        </alternativeName>
    </domain>
</protein>
<comment type="function">
    <text evidence="3">Multifunctional enzyme required for phylloquinone (vitamin K1) biosynthesis.</text>
</comment>
<comment type="catalytic activity">
    <reaction>
        <text>isochorismate + 2-oxoglutarate + H(+) = 5-enolpyruvoyl-6-hydroxy-2-succinyl-cyclohex-3-ene-1-carboxylate + CO2</text>
        <dbReference type="Rhea" id="RHEA:25593"/>
        <dbReference type="ChEBI" id="CHEBI:15378"/>
        <dbReference type="ChEBI" id="CHEBI:16526"/>
        <dbReference type="ChEBI" id="CHEBI:16810"/>
        <dbReference type="ChEBI" id="CHEBI:29780"/>
        <dbReference type="ChEBI" id="CHEBI:58818"/>
        <dbReference type="EC" id="2.2.1.9"/>
    </reaction>
</comment>
<comment type="catalytic activity">
    <reaction>
        <text>(1R,6R)-6-hydroxy-2-succinyl-cyclohexa-2,4-diene-1-carboxylate = 2-succinylbenzoate + H2O</text>
        <dbReference type="Rhea" id="RHEA:10196"/>
        <dbReference type="ChEBI" id="CHEBI:15377"/>
        <dbReference type="ChEBI" id="CHEBI:18325"/>
        <dbReference type="ChEBI" id="CHEBI:58689"/>
        <dbReference type="EC" id="4.2.1.113"/>
    </reaction>
</comment>
<comment type="catalytic activity">
    <reaction>
        <text>5-enolpyruvoyl-6-hydroxy-2-succinyl-cyclohex-3-ene-1-carboxylate = (1R,6R)-6-hydroxy-2-succinyl-cyclohexa-2,4-diene-1-carboxylate + pyruvate</text>
        <dbReference type="Rhea" id="RHEA:25597"/>
        <dbReference type="ChEBI" id="CHEBI:15361"/>
        <dbReference type="ChEBI" id="CHEBI:58689"/>
        <dbReference type="ChEBI" id="CHEBI:58818"/>
        <dbReference type="EC" id="4.2.99.20"/>
    </reaction>
</comment>
<comment type="cofactor">
    <cofactor evidence="1">
        <name>Mg(2+)</name>
        <dbReference type="ChEBI" id="CHEBI:18420"/>
    </cofactor>
    <cofactor evidence="1">
        <name>Mn(2+)</name>
        <dbReference type="ChEBI" id="CHEBI:29035"/>
    </cofactor>
</comment>
<comment type="cofactor">
    <cofactor evidence="1">
        <name>thiamine diphosphate</name>
        <dbReference type="ChEBI" id="CHEBI:58937"/>
    </cofactor>
    <text evidence="1">Binds 1 thiamine pyrophosphate per subunit.</text>
</comment>
<comment type="subcellular location">
    <subcellularLocation>
        <location evidence="5">Plastid</location>
        <location evidence="5">Chloroplast membrane</location>
        <topology evidence="5">Single-pass membrane protein</topology>
    </subcellularLocation>
</comment>
<comment type="alternative products">
    <event type="alternative splicing"/>
    <isoform>
        <id>Q15KI9-1</id>
        <name>1</name>
        <sequence type="displayed"/>
    </isoform>
    <isoform>
        <id>Q15KI9-2</id>
        <name>2</name>
        <sequence type="described" ref="VSP_040862 VSP_040863"/>
    </isoform>
    <text>A number of isoforms are produced. According to EST sequences.</text>
</comment>
<comment type="disruption phenotype">
    <text evidence="3">High chlorophyll fluorescence and lack of phylloquinone.</text>
</comment>
<comment type="miscellaneous">
    <text evidence="6">Consists of a fusion of four bacterial genes, menF, menD, menC and menH belonging to the same operon. In higher plants, the C-terminal chorismate binding domain is absent from the isochorismate synthase (MenF) module, leading to a non-functional module. The isochorismate synthase activity has been taken over by ISC1 and ICS2. In green and red algae lineages, this module has maintained its structural integrity and is functional (PubMed:16617180).</text>
</comment>
<comment type="similarity">
    <text evidence="5">In the N-terminal section; belongs to the isochorismate synthase family.</text>
</comment>
<comment type="similarity">
    <text evidence="5">In the 2nd section; belongs to the TPP enzyme family. MenD subfamily.</text>
</comment>
<comment type="similarity">
    <text evidence="5">In the 3rd section; belongs to the mandelate racemase/muconate lactonizing enzyme family. MenC type 1 subfamily.</text>
</comment>
<comment type="similarity">
    <text evidence="5">In the C-terminal section; belongs to the AB hydrolase superfamily. MenH family.</text>
</comment>
<comment type="sequence caution" evidence="5">
    <conflict type="erroneous gene model prediction">
        <sequence resource="EMBL-CDS" id="AAG51591"/>
    </conflict>
    <text>Was originally thought to correspond to two different genes At1g68890 and At1g68900.</text>
</comment>
<comment type="sequence caution" evidence="5">
    <conflict type="erroneous gene model prediction">
        <sequence resource="EMBL-CDS" id="AAG51593"/>
    </conflict>
    <text>Was originally thought to correspond to two different genes At1g68890 and At1g68900.</text>
</comment>
<accession>Q15KI9</accession>
<accession>Q0WV21</accession>
<accession>Q15KJ0</accession>
<accession>Q9CAB1</accession>
<accession>Q9CAB2</accession>
<sequence>MRSSFLVSNPPFLPSLIPRYSSRKSIRRSRERFSFPESLRVSLLHGIRRNIEVAQGVQFDGPIMDRDVNLDDDLVVQVCVTRTLPPALTLELGLESLKEAIDELKTNPPKSSSGVLRFQVAVPPRAKALFWFCSQPTTSDVFPVFFLSKDTVEPSYKSLYVKEPHGVFGIGNAFAFVHSSSVDSNGHSMIKTFLSDESAMVTAYGFPDIEFNKYSTVNSKDGSSYFFVPQIELDEHEEVSILAVTLAWNESLSYTVEQTISSYEKSIFQVSSHFCPNVEDHWFKHLKSSLAKLSVEEIHPLEMEHMGFFTFSGRDQADVKELKSIQSSCQFHCKLSPDVVFSNNMLNRETEVSNFLRDEANINAVWASAIIEECTRLGLTYFCVAPGSRSSHLAIAAANHPLTTCLACFDERSLAFHAIGYAKGSLKPAVIITSSGTAVSNLLPAVVEASEDFLPLLLLTADRPPELQGVGANQAINQINHFGSFVRFFFNLPPPTDLIPVRMVLTTVDSALHWATGSACGPVHLNCPFRDPLDGSPTNWSSNCLNGLDMWMSNAEPFTKYFQVQSHKSDGVTTGQITEILQVIKEAKKGLLLIGAIHTEDEIWASLLLAKELMWPVVADVLSGVRLRKLFKPFVEKLTHVFVDHLDHALFSDSVRNLIEFDVVIQVGSRITSKRVSQMLEKCFPFAYILVDKHPCRHDPSHLVTHRVQSNIVQFANCVLKSRFPWRRSKLHGHLQALDGAIAREMSFQISAESSLTEPYVAHMLSKALTSKSALFIGNSMPIRDVDMYGCSSENSSHVVDMMLSAELPCQWIQVTGNRGASGIDGLLSSATGFAVGCKKRVVCVVGDISFLHDTNGLAILKQRIARKPMTILVINNRGGGIFRLLPIAKKTEPSVLNQYFYTAHDISIENLCLAHGVRYVHVGTKSELEDALFVPSVEEMDCIVEVESSINANAIVHSTLERFARQAAENSLGIVSASSFLHPMIKNVLLCQVSGIQYSQYRVKLCDRPTICSDEFSQFHREGFILSLTLEDGSIGYGEVAPLNSNVENLMDVEGQLQLVLHLMNEAKFSYMLPLLNGSISSWIWSELGITASSIFPSVRCGLEMALLNAMAVRHDSSLLGILHYQKEENGSAQPHSVQICALLDSEGTPLEVAYVARKLVQEGFSAIKLKVGRRVSSVQDALVMQEVRRAVGVQIELRADANCRWTFEEAREFGLLVNSCNLKYIEEPVQNKDDLIRFHEETGLPVALDETLDDFEECPLRMLTKYTHPGIVAVVIKPSVVGGFENAALIARWAQQHGKMAVISAAYESGLGLSAYILFASYLEMENVKASTEQKQGTPPSVAHGLGTYRWLSEDVMMNTLGIFRSPYSGFVEGFIADASRNLKDVKINNDVIVRTSKGIPVRRYELRVDVDGFSHFIRVHDVGENAEGSVALFLHGFLGTGEEWIPIMTGISGSARCISVDIPGHGRSRVQSHASETQTSPTFSMEMIAEALYKLIEQITPGKVTIVGYSMGARIALYMALRFSNKIEGAVVVSGSPGLKDPVARKIRSATDDSKARMMVDNGLYIFIENWYNGGLWKSLRNHPHFSKIAASRLLHGDVPSVAKLLSDLSSGRQPSLWEELEDCDTNISLVFGEKDVKYKQIATRMYREMSKSKKSVNNIIEIVEIPEAGHAVHLESPLRVILALRKFLTRVHNSSTETELSQKLLLALKEM</sequence>
<proteinExistence type="evidence at transcript level"/>
<evidence type="ECO:0000250" key="1"/>
<evidence type="ECO:0000255" key="2"/>
<evidence type="ECO:0000269" key="3">
    <source>
    </source>
</evidence>
<evidence type="ECO:0000303" key="4">
    <source>
    </source>
</evidence>
<evidence type="ECO:0000305" key="5"/>
<evidence type="ECO:0000305" key="6">
    <source>
    </source>
</evidence>
<name>PHYLO_ARATH</name>
<feature type="transit peptide" description="Chloroplast" evidence="2">
    <location>
        <begin position="1"/>
        <end position="19"/>
    </location>
</feature>
<feature type="chain" id="PRO_0000406882" description="Protein PHYLLO, chloroplastic">
    <location>
        <begin position="20"/>
        <end position="1715"/>
    </location>
</feature>
<feature type="transmembrane region" description="Helical" evidence="2">
    <location>
        <begin position="429"/>
        <end position="449"/>
    </location>
</feature>
<feature type="domain" description="AB hydrolase-1" evidence="2">
    <location>
        <begin position="1435"/>
        <end position="1540"/>
    </location>
</feature>
<feature type="region of interest" description="Inactive isochorismate synthase" evidence="1">
    <location>
        <begin position="20"/>
        <end position="273"/>
    </location>
</feature>
<feature type="region of interest" description="2-succinyl-5-enolpyruvyl-6-hydroxy-3-cyclohexene-1-carboxylate synthase" evidence="1">
    <location>
        <begin position="363"/>
        <end position="933"/>
    </location>
</feature>
<feature type="region of interest" description="O-succinylbenzoate synthase" evidence="1">
    <location>
        <begin position="981"/>
        <end position="1364"/>
    </location>
</feature>
<feature type="region of interest" description="2-succinyl-6-hydroxy-2,4-cyclohexadiene-1-carboxylate synthase" evidence="1">
    <location>
        <begin position="1418"/>
        <end position="1715"/>
    </location>
</feature>
<feature type="active site" description="Proton donor; for the o-succinylbenzoate synthase activity" evidence="1">
    <location>
        <position position="1170"/>
    </location>
</feature>
<feature type="active site" description="Proton acceptor; for the o-succinylbenzoate synthase activity" evidence="1">
    <location>
        <position position="1279"/>
    </location>
</feature>
<feature type="binding site" evidence="1">
    <location>
        <position position="1202"/>
    </location>
    <ligand>
        <name>Mg(2+)</name>
        <dbReference type="ChEBI" id="CHEBI:18420"/>
    </ligand>
</feature>
<feature type="binding site" evidence="1">
    <location>
        <position position="1228"/>
    </location>
    <ligand>
        <name>Mg(2+)</name>
        <dbReference type="ChEBI" id="CHEBI:18420"/>
    </ligand>
</feature>
<feature type="binding site" evidence="1">
    <location>
        <position position="1251"/>
    </location>
    <ligand>
        <name>Mg(2+)</name>
        <dbReference type="ChEBI" id="CHEBI:18420"/>
    </ligand>
</feature>
<feature type="splice variant" id="VSP_040862" description="In isoform 2." evidence="4">
    <original>KSIQS</original>
    <variation>VSSLP</variation>
    <location>
        <begin position="323"/>
        <end position="327"/>
    </location>
</feature>
<feature type="splice variant" id="VSP_040863" description="In isoform 2." evidence="4">
    <location>
        <begin position="328"/>
        <end position="1715"/>
    </location>
</feature>
<feature type="sequence conflict" description="In Ref. 1; AAZ40194/AAZ40195." evidence="5" ref="1">
    <original>R</original>
    <variation>Q</variation>
    <location>
        <position position="48"/>
    </location>
</feature>
<gene>
    <name type="primary">PHYLLO</name>
    <name type="ordered locus">At1g68890/At1g68900</name>
    <name type="ORF">T6L1.7/T6L1.8</name>
</gene>